<reference key="1">
    <citation type="journal article" date="2003" name="Nat. Genet.">
        <title>Mutations in NHLRC1 cause progressive myoclonus epilepsy.</title>
        <authorList>
            <person name="Chan E.M."/>
            <person name="Young E.J."/>
            <person name="Ianzano L."/>
            <person name="Munteanu I."/>
            <person name="Zhao X."/>
            <person name="Christopoulos C.C."/>
            <person name="Avanzini G."/>
            <person name="Elia M."/>
            <person name="Ackerley C.A."/>
            <person name="Jovic N.J."/>
            <person name="Bohlega S."/>
            <person name="Andermann E."/>
            <person name="Rouleau G.A."/>
            <person name="Delgado-Escueta A.V."/>
            <person name="Minassian B.A."/>
            <person name="Scherer S.W."/>
        </authorList>
    </citation>
    <scope>NUCLEOTIDE SEQUENCE [MRNA]</scope>
    <scope>SUBCELLULAR LOCATION</scope>
    <scope>TISSUE SPECIFICITY</scope>
    <scope>VARIANTS MELF2 SER-26; SER-33; ALA-69; PRO-87; ASN-146 AND PRO-302</scope>
    <scope>VARIANT LEU-111</scope>
</reference>
<reference key="2">
    <citation type="journal article" date="2003" name="Nature">
        <title>The DNA sequence and analysis of human chromosome 6.</title>
        <authorList>
            <person name="Mungall A.J."/>
            <person name="Palmer S.A."/>
            <person name="Sims S.K."/>
            <person name="Edwards C.A."/>
            <person name="Ashurst J.L."/>
            <person name="Wilming L."/>
            <person name="Jones M.C."/>
            <person name="Horton R."/>
            <person name="Hunt S.E."/>
            <person name="Scott C.E."/>
            <person name="Gilbert J.G.R."/>
            <person name="Clamp M.E."/>
            <person name="Bethel G."/>
            <person name="Milne S."/>
            <person name="Ainscough R."/>
            <person name="Almeida J.P."/>
            <person name="Ambrose K.D."/>
            <person name="Andrews T.D."/>
            <person name="Ashwell R.I.S."/>
            <person name="Babbage A.K."/>
            <person name="Bagguley C.L."/>
            <person name="Bailey J."/>
            <person name="Banerjee R."/>
            <person name="Barker D.J."/>
            <person name="Barlow K.F."/>
            <person name="Bates K."/>
            <person name="Beare D.M."/>
            <person name="Beasley H."/>
            <person name="Beasley O."/>
            <person name="Bird C.P."/>
            <person name="Blakey S.E."/>
            <person name="Bray-Allen S."/>
            <person name="Brook J."/>
            <person name="Brown A.J."/>
            <person name="Brown J.Y."/>
            <person name="Burford D.C."/>
            <person name="Burrill W."/>
            <person name="Burton J."/>
            <person name="Carder C."/>
            <person name="Carter N.P."/>
            <person name="Chapman J.C."/>
            <person name="Clark S.Y."/>
            <person name="Clark G."/>
            <person name="Clee C.M."/>
            <person name="Clegg S."/>
            <person name="Cobley V."/>
            <person name="Collier R.E."/>
            <person name="Collins J.E."/>
            <person name="Colman L.K."/>
            <person name="Corby N.R."/>
            <person name="Coville G.J."/>
            <person name="Culley K.M."/>
            <person name="Dhami P."/>
            <person name="Davies J."/>
            <person name="Dunn M."/>
            <person name="Earthrowl M.E."/>
            <person name="Ellington A.E."/>
            <person name="Evans K.A."/>
            <person name="Faulkner L."/>
            <person name="Francis M.D."/>
            <person name="Frankish A."/>
            <person name="Frankland J."/>
            <person name="French L."/>
            <person name="Garner P."/>
            <person name="Garnett J."/>
            <person name="Ghori M.J."/>
            <person name="Gilby L.M."/>
            <person name="Gillson C.J."/>
            <person name="Glithero R.J."/>
            <person name="Grafham D.V."/>
            <person name="Grant M."/>
            <person name="Gribble S."/>
            <person name="Griffiths C."/>
            <person name="Griffiths M.N.D."/>
            <person name="Hall R."/>
            <person name="Halls K.S."/>
            <person name="Hammond S."/>
            <person name="Harley J.L."/>
            <person name="Hart E.A."/>
            <person name="Heath P.D."/>
            <person name="Heathcott R."/>
            <person name="Holmes S.J."/>
            <person name="Howden P.J."/>
            <person name="Howe K.L."/>
            <person name="Howell G.R."/>
            <person name="Huckle E."/>
            <person name="Humphray S.J."/>
            <person name="Humphries M.D."/>
            <person name="Hunt A.R."/>
            <person name="Johnson C.M."/>
            <person name="Joy A.A."/>
            <person name="Kay M."/>
            <person name="Keenan S.J."/>
            <person name="Kimberley A.M."/>
            <person name="King A."/>
            <person name="Laird G.K."/>
            <person name="Langford C."/>
            <person name="Lawlor S."/>
            <person name="Leongamornlert D.A."/>
            <person name="Leversha M."/>
            <person name="Lloyd C.R."/>
            <person name="Lloyd D.M."/>
            <person name="Loveland J.E."/>
            <person name="Lovell J."/>
            <person name="Martin S."/>
            <person name="Mashreghi-Mohammadi M."/>
            <person name="Maslen G.L."/>
            <person name="Matthews L."/>
            <person name="McCann O.T."/>
            <person name="McLaren S.J."/>
            <person name="McLay K."/>
            <person name="McMurray A."/>
            <person name="Moore M.J.F."/>
            <person name="Mullikin J.C."/>
            <person name="Niblett D."/>
            <person name="Nickerson T."/>
            <person name="Novik K.L."/>
            <person name="Oliver K."/>
            <person name="Overton-Larty E.K."/>
            <person name="Parker A."/>
            <person name="Patel R."/>
            <person name="Pearce A.V."/>
            <person name="Peck A.I."/>
            <person name="Phillimore B.J.C.T."/>
            <person name="Phillips S."/>
            <person name="Plumb R.W."/>
            <person name="Porter K.M."/>
            <person name="Ramsey Y."/>
            <person name="Ranby S.A."/>
            <person name="Rice C.M."/>
            <person name="Ross M.T."/>
            <person name="Searle S.M."/>
            <person name="Sehra H.K."/>
            <person name="Sheridan E."/>
            <person name="Skuce C.D."/>
            <person name="Smith S."/>
            <person name="Smith M."/>
            <person name="Spraggon L."/>
            <person name="Squares S.L."/>
            <person name="Steward C.A."/>
            <person name="Sycamore N."/>
            <person name="Tamlyn-Hall G."/>
            <person name="Tester J."/>
            <person name="Theaker A.J."/>
            <person name="Thomas D.W."/>
            <person name="Thorpe A."/>
            <person name="Tracey A."/>
            <person name="Tromans A."/>
            <person name="Tubby B."/>
            <person name="Wall M."/>
            <person name="Wallis J.M."/>
            <person name="West A.P."/>
            <person name="White S.S."/>
            <person name="Whitehead S.L."/>
            <person name="Whittaker H."/>
            <person name="Wild A."/>
            <person name="Willey D.J."/>
            <person name="Wilmer T.E."/>
            <person name="Wood J.M."/>
            <person name="Wray P.W."/>
            <person name="Wyatt J.C."/>
            <person name="Young L."/>
            <person name="Younger R.M."/>
            <person name="Bentley D.R."/>
            <person name="Coulson A."/>
            <person name="Durbin R.M."/>
            <person name="Hubbard T."/>
            <person name="Sulston J.E."/>
            <person name="Dunham I."/>
            <person name="Rogers J."/>
            <person name="Beck S."/>
        </authorList>
    </citation>
    <scope>NUCLEOTIDE SEQUENCE [LARGE SCALE GENOMIC DNA]</scope>
</reference>
<reference key="3">
    <citation type="journal article" date="2004" name="Genome Res.">
        <title>The status, quality, and expansion of the NIH full-length cDNA project: the Mammalian Gene Collection (MGC).</title>
        <authorList>
            <consortium name="The MGC Project Team"/>
        </authorList>
    </citation>
    <scope>NUCLEOTIDE SEQUENCE [LARGE SCALE MRNA]</scope>
    <scope>VARIANT LEU-111</scope>
</reference>
<reference key="4">
    <citation type="journal article" date="2005" name="Proc. Natl. Acad. Sci. U.S.A.">
        <title>Insights into Lafora disease: malin is an E3 ubiquitin ligase that ubiquitinates and promotes the degradation of laforin.</title>
        <authorList>
            <person name="Gentry M.S."/>
            <person name="Worby C.A."/>
            <person name="Dixon J.E."/>
        </authorList>
    </citation>
    <scope>FUNCTION</scope>
    <scope>INTERACTION WITH EPM2A</scope>
    <scope>DOMAIN RING</scope>
    <scope>CHARACTERIZATION OF VARIANT MELF2 PRO-302</scope>
    <scope>MUTAGENESIS OF GLU-280</scope>
</reference>
<reference key="5">
    <citation type="journal article" date="2007" name="Genes Dev.">
        <title>A role for AGL ubiquitination in the glycogen storage disorders of Lafora and Cori's disease.</title>
        <authorList>
            <person name="Cheng A."/>
            <person name="Zhang M."/>
            <person name="Gentry M.S."/>
            <person name="Worby C.A."/>
            <person name="Dixon J.E."/>
            <person name="Saltiel A.R."/>
        </authorList>
    </citation>
    <scope>FUNCTION</scope>
    <scope>SUBCELLULAR LOCATION</scope>
    <scope>INTERACTION WITH AGL</scope>
</reference>
<reference key="6">
    <citation type="journal article" date="2008" name="J. Biol. Chem.">
        <title>Malin decreases glycogen accumulation by promoting the degradation of protein targeting to glycogen (PTG).</title>
        <authorList>
            <person name="Worby C.A."/>
            <person name="Gentry M.S."/>
            <person name="Dixon J.E."/>
        </authorList>
    </citation>
    <scope>FUNCTION</scope>
</reference>
<reference key="7">
    <citation type="journal article" date="2009" name="Hum. Mol. Genet.">
        <title>The malin-laforin complex suppresses the cellular toxicity of misfolded proteins by promoting their degradation through the ubiquitin-proteasome system.</title>
        <authorList>
            <person name="Garyali P."/>
            <person name="Siwach P."/>
            <person name="Singh P.K."/>
            <person name="Puri R."/>
            <person name="Mittal S."/>
            <person name="Sengupta S."/>
            <person name="Parihar R."/>
            <person name="Ganesh S."/>
        </authorList>
    </citation>
    <scope>FUNCTION</scope>
    <scope>COMPLEX FORMATION WITH EPM2A AND HSP70</scope>
</reference>
<reference key="8">
    <citation type="journal article" date="2012" name="Brain">
        <title>Early-onset Lafora body disease.</title>
        <authorList>
            <person name="Turnbull J."/>
            <person name="Girard J.M."/>
            <person name="Lohi H."/>
            <person name="Chan E.M."/>
            <person name="Wang P."/>
            <person name="Tiberia E."/>
            <person name="Omer S."/>
            <person name="Ahmed M."/>
            <person name="Bennett C."/>
            <person name="Chakrabarty A."/>
            <person name="Tyagi A."/>
            <person name="Liu Y."/>
            <person name="Pencea N."/>
            <person name="Zhao X."/>
            <person name="Scherer S.W."/>
            <person name="Ackerley C.A."/>
            <person name="Minassian B.A."/>
        </authorList>
    </citation>
    <scope>INTERACTION WITH PRDM8</scope>
</reference>
<reference key="9">
    <citation type="journal article" date="2013" name="Int. J. Biochem. Cell Biol.">
        <title>Glycogenic activity of R6, a protein phosphatase 1 regulatory subunit, is modulated by the laforin-malin complex.</title>
        <authorList>
            <person name="Rubio-Villena C."/>
            <person name="Garcia-Gimeno M.A."/>
            <person name="Sanz P."/>
        </authorList>
    </citation>
    <scope>FUNCTION</scope>
</reference>
<reference key="10">
    <citation type="journal article" date="2005" name="J. Hum. Genet.">
        <title>Mutations in the NHLRC1 gene are the common cause for Lafora disease in the Japanese population.</title>
        <authorList>
            <person name="Singh S."/>
            <person name="Suzuki T."/>
            <person name="Uchiyama A."/>
            <person name="Kumada S."/>
            <person name="Moriyama N."/>
            <person name="Hirose S."/>
            <person name="Takahashi Y."/>
            <person name="Sugie H."/>
            <person name="Mizoguchi K."/>
            <person name="Inoue Y."/>
            <person name="Kimura K."/>
            <person name="Sawaishi Y."/>
            <person name="Yamakawa K."/>
            <person name="Ganesh S."/>
        </authorList>
    </citation>
    <scope>VARIANTS MELF2 MET-153; ARG-160; ARG-219; ASN-245 AND LYS-253</scope>
    <scope>VARIANT LEU-111</scope>
</reference>
<reference key="11">
    <citation type="journal article" date="2005" name="Neurology">
        <title>Lafora disease due to EPM2B mutations: a clinical and genetic study.</title>
        <authorList>
            <person name="Gomez-Abad C."/>
            <person name="Gomez-Garre P."/>
            <person name="Gutierrez-Delicado E."/>
            <person name="Saygi S."/>
            <person name="Michelucci R."/>
            <person name="Tassinari C.A."/>
            <person name="Rodriguez de Cordoba S."/>
            <person name="Serratosa J.M."/>
        </authorList>
    </citation>
    <scope>VARIANTS MELF2 GLN-67; TYR-68; ASN-198; ALA-233; HIS-264; 294-VAL-LYS-295 DEL AND ALA-308</scope>
</reference>
<reference key="12">
    <citation type="journal article" date="2008" name="Hum. Mutat.">
        <title>Lafora disease in the Indian population: EPM2A and NHLRC1 gene mutations and their impact on subcellular localization of laforin and malin.</title>
        <authorList>
            <person name="Singh S."/>
            <person name="Satishchandra P."/>
            <person name="Shankar S.K."/>
            <person name="Ganesh S."/>
        </authorList>
    </citation>
    <scope>VARIANTS MELF2 ARG-22; PRO-126 AND PRO-279</scope>
    <scope>CHARACTERIZATION OF VARIANTS MELF2 ARG-22; PRO-126 AND PRO-279</scope>
</reference>
<reference key="13">
    <citation type="journal article" date="2011" name="J. Mol. Med.">
        <title>Lafora progressive myoclonus epilepsy: NHLRC1 mutations affect glycogen metabolism.</title>
        <authorList>
            <person name="Couarch P."/>
            <person name="Vernia S."/>
            <person name="Gourfinkel-An I."/>
            <person name="Lesca G."/>
            <person name="Gataullina S."/>
            <person name="Fedirko E."/>
            <person name="Trouillard O."/>
            <person name="Depienne C."/>
            <person name="Dulac O."/>
            <person name="Steschenko D."/>
            <person name="Leguern E."/>
            <person name="Sanz P."/>
            <person name="Baulac S."/>
        </authorList>
    </citation>
    <scope>VARIANTS MELF2 TYR-46; ALA-69; ASN-146 AND PRO-261</scope>
    <scope>CHARACTERIZATION OF VARIANTS MELF2 TYR-46; ALA-69; ASN-146 AND PRO-261</scope>
    <scope>FUNCTION</scope>
    <scope>SUBCELLULAR LOCATION</scope>
    <scope>INTERACTION WITH EPM2A</scope>
</reference>
<keyword id="KW-0072">Autophagy</keyword>
<keyword id="KW-0225">Disease variant</keyword>
<keyword id="KW-0256">Endoplasmic reticulum</keyword>
<keyword id="KW-0887">Epilepsy</keyword>
<keyword id="KW-0479">Metal-binding</keyword>
<keyword id="KW-0523">Neurodegeneration</keyword>
<keyword id="KW-0539">Nucleus</keyword>
<keyword id="KW-1267">Proteomics identification</keyword>
<keyword id="KW-1185">Reference proteome</keyword>
<keyword id="KW-0677">Repeat</keyword>
<keyword id="KW-0808">Transferase</keyword>
<keyword id="KW-0833">Ubl conjugation pathway</keyword>
<keyword id="KW-0862">Zinc</keyword>
<keyword id="KW-0863">Zinc-finger</keyword>
<feature type="chain" id="PRO_0000055980" description="E3 ubiquitin-protein ligase NHLRC1">
    <location>
        <begin position="1"/>
        <end position="395"/>
    </location>
</feature>
<feature type="repeat" description="NHL 1">
    <location>
        <begin position="113"/>
        <end position="157"/>
    </location>
</feature>
<feature type="repeat" description="NHL 2">
    <location>
        <begin position="161"/>
        <end position="204"/>
    </location>
</feature>
<feature type="repeat" description="NHL 3">
    <location>
        <begin position="205"/>
        <end position="245"/>
    </location>
</feature>
<feature type="repeat" description="NHL 4">
    <location>
        <begin position="248"/>
        <end position="300"/>
    </location>
</feature>
<feature type="repeat" description="NHL 5">
    <location>
        <begin position="301"/>
        <end position="349"/>
    </location>
</feature>
<feature type="repeat" description="NHL 6">
    <location>
        <begin position="350"/>
        <end position="393"/>
    </location>
</feature>
<feature type="zinc finger region" description="RING-type" evidence="1">
    <location>
        <begin position="26"/>
        <end position="72"/>
    </location>
</feature>
<feature type="sequence variant" id="VAR_046387" description="In MELF2; does not significantly alters the subcellular location as compared to the wild-type." evidence="9">
    <original>S</original>
    <variation>R</variation>
    <location>
        <position position="22"/>
    </location>
</feature>
<feature type="sequence variant" id="VAR_019482" description="In MELF2; dbSNP:rs28940575." evidence="2">
    <original>C</original>
    <variation>S</variation>
    <location>
        <position position="26"/>
    </location>
</feature>
<feature type="sequence variant" id="VAR_019483" description="In MELF2; dbSNP:rs757759398." evidence="2">
    <original>F</original>
    <variation>S</variation>
    <location>
        <position position="33"/>
    </location>
</feature>
<feature type="sequence variant" id="VAR_070793" description="In MELF2; loss of interaction with EPM2A; increased levels of PPP1R3C and glycogen; dbSNP:rs1193718748." evidence="11">
    <original>C</original>
    <variation>Y</variation>
    <location>
        <position position="46"/>
    </location>
</feature>
<feature type="sequence variant" id="VAR_046388" description="In MELF2; dbSNP:rs779507031." evidence="4">
    <original>E</original>
    <variation>Q</variation>
    <location>
        <position position="67"/>
    </location>
</feature>
<feature type="sequence variant" id="VAR_046389" description="In MELF2." evidence="4">
    <original>C</original>
    <variation>Y</variation>
    <location>
        <position position="68"/>
    </location>
</feature>
<feature type="sequence variant" id="VAR_019484" description="In MELF2; severely reduced interaction with EPM2A; increased levels of PPP1R3C and glycogen; dbSNP:rs28940576." evidence="2 11">
    <original>P</original>
    <variation>A</variation>
    <location>
        <position position="69"/>
    </location>
</feature>
<feature type="sequence variant" id="VAR_019485" description="In MELF2." evidence="2">
    <original>L</original>
    <variation>P</variation>
    <location>
        <position position="87"/>
    </location>
</feature>
<feature type="sequence variant" id="VAR_019486" description="In dbSNP:rs10949483." evidence="2 3 6">
    <original>P</original>
    <variation>L</variation>
    <location>
        <position position="111"/>
    </location>
</feature>
<feature type="sequence variant" id="VAR_046390" description="In MELF2; the mutant protein targeted exclusively nucleus as compared to predominantly cytoplasmic and partially nuclear localization of the wild-type protein; dbSNP:rs950907157." evidence="9">
    <original>L</original>
    <variation>P</variation>
    <location>
        <position position="126"/>
    </location>
</feature>
<feature type="sequence variant" id="VAR_019487" description="In MELF2; severely reduced interaction with EPM2A; increased levels of PPP1R3C and glycogen; dbSNP:rs769301934." evidence="2 11">
    <original>D</original>
    <variation>N</variation>
    <location>
        <position position="146"/>
    </location>
</feature>
<feature type="sequence variant" id="VAR_046391" description="In MELF2." evidence="6">
    <original>I</original>
    <variation>M</variation>
    <location>
        <position position="153"/>
    </location>
</feature>
<feature type="sequence variant" id="VAR_046392" description="In MELF2; dbSNP:rs200595273." evidence="6">
    <original>C</original>
    <variation>R</variation>
    <location>
        <position position="160"/>
    </location>
</feature>
<feature type="sequence variant" id="VAR_046393" description="In MELF2; dbSNP:rs121917876." evidence="4">
    <original>I</original>
    <variation>N</variation>
    <location>
        <position position="198"/>
    </location>
</feature>
<feature type="sequence variant" id="VAR_046394" description="In MELF2; dbSNP:rs1783742869." evidence="6">
    <original>W</original>
    <variation>R</variation>
    <location>
        <position position="219"/>
    </location>
</feature>
<feature type="sequence variant" id="VAR_046395" description="In MELF2." evidence="4">
    <original>D</original>
    <variation>A</variation>
    <location>
        <position position="233"/>
    </location>
</feature>
<feature type="sequence variant" id="VAR_046396" description="In MELF2; dbSNP:rs2150702925." evidence="6">
    <original>D</original>
    <variation>N</variation>
    <location>
        <position position="245"/>
    </location>
</feature>
<feature type="sequence variant" id="VAR_046397" description="In MELF2." evidence="6">
    <original>R</original>
    <variation>K</variation>
    <location>
        <position position="253"/>
    </location>
</feature>
<feature type="sequence variant" id="VAR_070794" description="In MELF2; loss of interaction with EPM2A; increased levels of PPP1R3C and glycogen; dbSNP:rs879745047." evidence="11">
    <original>L</original>
    <variation>P</variation>
    <location>
        <position position="261"/>
    </location>
</feature>
<feature type="sequence variant" id="VAR_046398" description="In MELF2." evidence="4">
    <original>P</original>
    <variation>H</variation>
    <location>
        <position position="264"/>
    </location>
</feature>
<feature type="sequence variant" id="VAR_046399" description="In MELF2; significantly alters the distribution of the protein; a great majority of cells expressing the mutant form formed perinuclear inclusion when compared with the wild-type form." evidence="9">
    <original>L</original>
    <variation>P</variation>
    <location>
        <position position="279"/>
    </location>
</feature>
<feature type="sequence variant" id="VAR_046400" description="In MELF2." evidence="4">
    <location>
        <begin position="294"/>
        <end position="295"/>
    </location>
</feature>
<feature type="sequence variant" id="VAR_019488" description="In MELF2; loss of interaction with EPM2A; dbSNP:rs757858146." evidence="2 5">
    <original>Q</original>
    <variation>P</variation>
    <location>
        <position position="302"/>
    </location>
</feature>
<feature type="sequence variant" id="VAR_046401" description="In MELF2; dbSNP:rs137852859." evidence="4">
    <original>D</original>
    <variation>A</variation>
    <location>
        <position position="308"/>
    </location>
</feature>
<feature type="mutagenesis site" description="Loss of interaction with EP2MA." evidence="5">
    <original>E</original>
    <variation>K</variation>
    <location>
        <position position="280"/>
    </location>
</feature>
<comment type="function">
    <text evidence="5 7 8 10 11 13">E3 ubiquitin-protein ligase. Together with the phosphatase EPM2A/laforin, appears to be involved in the clearance of toxic polyglucosan and protein aggregates via multiple pathways. In complex with EPM2A/laforin and HSP70, suppresses the cellular toxicity of misfolded proteins by promoting their degradation through the ubiquitin-proteasome system (UPS). Ubiquitinates the glycogen-targeting protein phosphatase subunits PPP1R3C/PTG and PPP1R3D in a laforin-dependent manner and targets them for proteasome-dependent degradation, thus decreasing glycogen accumulation. Polyubiquitinates EPM2A/laforin and ubiquitinates AGL and targets them for proteasome-dependent degradation. Also promotes proteasome-independent protein degradation through the macroautophagy pathway.</text>
</comment>
<comment type="catalytic activity">
    <reaction>
        <text>S-ubiquitinyl-[E2 ubiquitin-conjugating enzyme]-L-cysteine + [acceptor protein]-L-lysine = [E2 ubiquitin-conjugating enzyme]-L-cysteine + N(6)-ubiquitinyl-[acceptor protein]-L-lysine.</text>
        <dbReference type="EC" id="2.3.2.27"/>
    </reaction>
</comment>
<comment type="pathway">
    <text>Protein modification; protein ubiquitination.</text>
</comment>
<comment type="subunit">
    <text evidence="5 7 11 12">Interacts with AGL. Interacts (via the NHL repeats) with EPM2A/laforin. Forms a complex with EPM2A/laforin and HSP70. Interacts with PRDM8 (PubMed:22961547).</text>
</comment>
<comment type="interaction">
    <interactant intactId="EBI-6426628">
        <id>Q6VVB1</id>
    </interactant>
    <interactant intactId="EBI-2506661">
        <id>O95278</id>
        <label>EPM2A</label>
    </interactant>
    <organismsDiffer>false</organismsDiffer>
    <experiments>8</experiments>
</comment>
<comment type="interaction">
    <interactant intactId="EBI-6426628">
        <id>Q6VVB1</id>
    </interactant>
    <interactant intactId="EBI-1040928">
        <id>Q9WUA5</id>
        <label>Epm2a</label>
    </interactant>
    <organismsDiffer>true</organismsDiffer>
    <experiments>12</experiments>
</comment>
<comment type="subcellular location">
    <subcellularLocation>
        <location>Endoplasmic reticulum</location>
    </subcellularLocation>
    <subcellularLocation>
        <location>Nucleus</location>
    </subcellularLocation>
    <text>Localizes at the endoplasmic reticulum and, to a lesser extent, in the nucleus.</text>
</comment>
<comment type="tissue specificity">
    <text evidence="2">Expressed in brain, cerebellum, spinal cord, medulla, heart, liver, skeletal muscle and pancreas.</text>
</comment>
<comment type="domain">
    <text evidence="5">The RING domain is essential for ubiquitin E3 ligase activity.</text>
</comment>
<comment type="disease" evidence="2 4 5 6 9 11">
    <disease id="DI-06802">
        <name>Myoclonic epilepsy of Lafora 2</name>
        <acronym>MELF2</acronym>
        <description>A form of progressive myoclonic epilepsy, a clinically and genetically heterogeneous group of disorders defined by the combination of action and reflex myoclonus, other types of epileptic seizures, and progressive neurodegeneration and neurocognitive impairment. MELF2 is an autosomal recessive, severe form characterized by onset of progressive neurodegeneration between 8 and 18 years of age. Initial features can include headache, myoclonic jerks, generalized seizures, and often visual hallucination. Typically, as seizures increase in frequency, cognitive function declines towards dementia, and affected individuals die usually within 10 years after onset. At the cellular level, MELF2 is characterized by accumulation of starch-like polyglucosans called Lafora bodies (LBs) that are most abundant in organs with the highest glucose metabolism: brain, heart, liver and skeletal muscle.</description>
        <dbReference type="MIM" id="620681"/>
    </disease>
    <text>The disease is caused by variants affecting the gene represented in this entry.</text>
</comment>
<comment type="online information" name="The Lafora progressive myoclonus epilepsy mutation and polymorphism database">
    <link uri="http://projects.tcag.ca/lafora/"/>
</comment>
<evidence type="ECO:0000255" key="1">
    <source>
        <dbReference type="PROSITE-ProRule" id="PRU00175"/>
    </source>
</evidence>
<evidence type="ECO:0000269" key="2">
    <source>
    </source>
</evidence>
<evidence type="ECO:0000269" key="3">
    <source>
    </source>
</evidence>
<evidence type="ECO:0000269" key="4">
    <source>
    </source>
</evidence>
<evidence type="ECO:0000269" key="5">
    <source>
    </source>
</evidence>
<evidence type="ECO:0000269" key="6">
    <source>
    </source>
</evidence>
<evidence type="ECO:0000269" key="7">
    <source>
    </source>
</evidence>
<evidence type="ECO:0000269" key="8">
    <source>
    </source>
</evidence>
<evidence type="ECO:0000269" key="9">
    <source>
    </source>
</evidence>
<evidence type="ECO:0000269" key="10">
    <source>
    </source>
</evidence>
<evidence type="ECO:0000269" key="11">
    <source>
    </source>
</evidence>
<evidence type="ECO:0000269" key="12">
    <source>
    </source>
</evidence>
<evidence type="ECO:0000269" key="13">
    <source>
    </source>
</evidence>
<evidence type="ECO:0000305" key="14"/>
<proteinExistence type="evidence at protein level"/>
<gene>
    <name type="primary">NHLRC1</name>
    <name type="synonym">EPM2B</name>
</gene>
<protein>
    <recommendedName>
        <fullName>E3 ubiquitin-protein ligase NHLRC1</fullName>
        <ecNumber>2.3.2.27</ecNumber>
    </recommendedName>
    <alternativeName>
        <fullName>Malin</fullName>
    </alternativeName>
    <alternativeName>
        <fullName>NHL repeat-containing protein 1</fullName>
    </alternativeName>
    <alternativeName>
        <fullName evidence="14">RING-type E3 ubiquitin transferase NHLRC1</fullName>
    </alternativeName>
</protein>
<dbReference type="EC" id="2.3.2.27"/>
<dbReference type="EMBL" id="AY324850">
    <property type="protein sequence ID" value="AAQ19671.1"/>
    <property type="molecule type" value="mRNA"/>
</dbReference>
<dbReference type="EMBL" id="AL589723">
    <property type="status" value="NOT_ANNOTATED_CDS"/>
    <property type="molecule type" value="Genomic_DNA"/>
</dbReference>
<dbReference type="EMBL" id="BC103888">
    <property type="protein sequence ID" value="AAI03889.1"/>
    <property type="molecule type" value="mRNA"/>
</dbReference>
<dbReference type="EMBL" id="BC103889">
    <property type="protein sequence ID" value="AAI03890.1"/>
    <property type="molecule type" value="mRNA"/>
</dbReference>
<dbReference type="EMBL" id="BC103890">
    <property type="protein sequence ID" value="AAI03891.1"/>
    <property type="molecule type" value="mRNA"/>
</dbReference>
<dbReference type="EMBL" id="BK001510">
    <property type="protein sequence ID" value="DAA01954.1"/>
    <property type="molecule type" value="mRNA"/>
</dbReference>
<dbReference type="CCDS" id="CCDS4542.1"/>
<dbReference type="RefSeq" id="NP_940988.2">
    <property type="nucleotide sequence ID" value="NM_198586.2"/>
</dbReference>
<dbReference type="SMR" id="Q6VVB1"/>
<dbReference type="BioGRID" id="132073">
    <property type="interactions" value="25"/>
</dbReference>
<dbReference type="CORUM" id="Q6VVB1"/>
<dbReference type="FunCoup" id="Q6VVB1">
    <property type="interactions" value="1563"/>
</dbReference>
<dbReference type="IntAct" id="Q6VVB1">
    <property type="interactions" value="17"/>
</dbReference>
<dbReference type="MINT" id="Q6VVB1"/>
<dbReference type="STRING" id="9606.ENSP00000345464"/>
<dbReference type="GlyGen" id="Q6VVB1">
    <property type="glycosylation" value="1 site, 1 O-linked glycan (1 site)"/>
</dbReference>
<dbReference type="iPTMnet" id="Q6VVB1"/>
<dbReference type="PhosphoSitePlus" id="Q6VVB1"/>
<dbReference type="BioMuta" id="NHLRC1"/>
<dbReference type="DMDM" id="50400890"/>
<dbReference type="jPOST" id="Q6VVB1"/>
<dbReference type="MassIVE" id="Q6VVB1"/>
<dbReference type="PaxDb" id="9606-ENSP00000345464"/>
<dbReference type="PeptideAtlas" id="Q6VVB1"/>
<dbReference type="ProteomicsDB" id="67732"/>
<dbReference type="ABCD" id="Q6VVB1">
    <property type="antibodies" value="1 sequenced antibody"/>
</dbReference>
<dbReference type="Antibodypedia" id="25182">
    <property type="antibodies" value="271 antibodies from 28 providers"/>
</dbReference>
<dbReference type="DNASU" id="378884"/>
<dbReference type="Ensembl" id="ENST00000340650.6">
    <property type="protein sequence ID" value="ENSP00000345464.3"/>
    <property type="gene ID" value="ENSG00000187566.6"/>
</dbReference>
<dbReference type="GeneID" id="378884"/>
<dbReference type="KEGG" id="hsa:378884"/>
<dbReference type="MANE-Select" id="ENST00000340650.6">
    <property type="protein sequence ID" value="ENSP00000345464.3"/>
    <property type="RefSeq nucleotide sequence ID" value="NM_198586.3"/>
    <property type="RefSeq protein sequence ID" value="NP_940988.2"/>
</dbReference>
<dbReference type="UCSC" id="uc003ncl.2">
    <property type="organism name" value="human"/>
</dbReference>
<dbReference type="AGR" id="HGNC:21576"/>
<dbReference type="CTD" id="378884"/>
<dbReference type="DisGeNET" id="378884"/>
<dbReference type="GeneCards" id="NHLRC1"/>
<dbReference type="GeneReviews" id="NHLRC1"/>
<dbReference type="HGNC" id="HGNC:21576">
    <property type="gene designation" value="NHLRC1"/>
</dbReference>
<dbReference type="HPA" id="ENSG00000187566">
    <property type="expression patterns" value="Low tissue specificity"/>
</dbReference>
<dbReference type="MalaCards" id="NHLRC1"/>
<dbReference type="MIM" id="608072">
    <property type="type" value="gene"/>
</dbReference>
<dbReference type="MIM" id="620681">
    <property type="type" value="phenotype"/>
</dbReference>
<dbReference type="neXtProt" id="NX_Q6VVB1"/>
<dbReference type="OpenTargets" id="ENSG00000187566"/>
<dbReference type="Orphanet" id="501">
    <property type="disease" value="Lafora disease"/>
</dbReference>
<dbReference type="PharmGKB" id="PA134916338"/>
<dbReference type="VEuPathDB" id="HostDB:ENSG00000187566"/>
<dbReference type="eggNOG" id="KOG2177">
    <property type="taxonomic scope" value="Eukaryota"/>
</dbReference>
<dbReference type="GeneTree" id="ENSGT00730000111361"/>
<dbReference type="HOGENOM" id="CLU_696320_0_0_1"/>
<dbReference type="InParanoid" id="Q6VVB1"/>
<dbReference type="OMA" id="HHAFGGW"/>
<dbReference type="OrthoDB" id="6105938at2759"/>
<dbReference type="PAN-GO" id="Q6VVB1">
    <property type="GO annotations" value="4 GO annotations based on evolutionary models"/>
</dbReference>
<dbReference type="PhylomeDB" id="Q6VVB1"/>
<dbReference type="TreeFam" id="TF331018"/>
<dbReference type="PathwayCommons" id="Q6VVB1"/>
<dbReference type="Reactome" id="R-HSA-3322077">
    <property type="pathway name" value="Glycogen synthesis"/>
</dbReference>
<dbReference type="Reactome" id="R-HSA-3785653">
    <property type="pathway name" value="Myoclonic epilepsy of Lafora"/>
</dbReference>
<dbReference type="SignaLink" id="Q6VVB1"/>
<dbReference type="SIGNOR" id="Q6VVB1"/>
<dbReference type="UniPathway" id="UPA00143"/>
<dbReference type="BioGRID-ORCS" id="378884">
    <property type="hits" value="12 hits in 1189 CRISPR screens"/>
</dbReference>
<dbReference type="CD-CODE" id="8C2F96ED">
    <property type="entry name" value="Centrosome"/>
</dbReference>
<dbReference type="GeneWiki" id="NHLRC1"/>
<dbReference type="GenomeRNAi" id="378884"/>
<dbReference type="Pharos" id="Q6VVB1">
    <property type="development level" value="Tbio"/>
</dbReference>
<dbReference type="PRO" id="PR:Q6VVB1"/>
<dbReference type="Proteomes" id="UP000005640">
    <property type="component" value="Chromosome 6"/>
</dbReference>
<dbReference type="RNAct" id="Q6VVB1">
    <property type="molecule type" value="protein"/>
</dbReference>
<dbReference type="Bgee" id="ENSG00000187566">
    <property type="expression patterns" value="Expressed in prefrontal cortex and 100 other cell types or tissues"/>
</dbReference>
<dbReference type="GO" id="GO:0005829">
    <property type="term" value="C:cytosol"/>
    <property type="evidence" value="ECO:0000314"/>
    <property type="project" value="HPA"/>
</dbReference>
<dbReference type="GO" id="GO:0005783">
    <property type="term" value="C:endoplasmic reticulum"/>
    <property type="evidence" value="ECO:0007669"/>
    <property type="project" value="UniProtKB-SubCell"/>
</dbReference>
<dbReference type="GO" id="GO:0005654">
    <property type="term" value="C:nucleoplasm"/>
    <property type="evidence" value="ECO:0000314"/>
    <property type="project" value="HPA"/>
</dbReference>
<dbReference type="GO" id="GO:0005634">
    <property type="term" value="C:nucleus"/>
    <property type="evidence" value="ECO:0000314"/>
    <property type="project" value="UniProtKB"/>
</dbReference>
<dbReference type="GO" id="GO:0048471">
    <property type="term" value="C:perinuclear region of cytoplasm"/>
    <property type="evidence" value="ECO:0007669"/>
    <property type="project" value="Ensembl"/>
</dbReference>
<dbReference type="GO" id="GO:0061630">
    <property type="term" value="F:ubiquitin protein ligase activity"/>
    <property type="evidence" value="ECO:0000318"/>
    <property type="project" value="GO_Central"/>
</dbReference>
<dbReference type="GO" id="GO:0004842">
    <property type="term" value="F:ubiquitin-protein transferase activity"/>
    <property type="evidence" value="ECO:0000314"/>
    <property type="project" value="UniProtKB"/>
</dbReference>
<dbReference type="GO" id="GO:0008270">
    <property type="term" value="F:zinc ion binding"/>
    <property type="evidence" value="ECO:0007669"/>
    <property type="project" value="UniProtKB-KW"/>
</dbReference>
<dbReference type="GO" id="GO:0006914">
    <property type="term" value="P:autophagy"/>
    <property type="evidence" value="ECO:0007669"/>
    <property type="project" value="UniProtKB-KW"/>
</dbReference>
<dbReference type="GO" id="GO:0005978">
    <property type="term" value="P:glycogen biosynthetic process"/>
    <property type="evidence" value="ECO:0000304"/>
    <property type="project" value="Reactome"/>
</dbReference>
<dbReference type="GO" id="GO:0031398">
    <property type="term" value="P:positive regulation of protein ubiquitination"/>
    <property type="evidence" value="ECO:0007669"/>
    <property type="project" value="Ensembl"/>
</dbReference>
<dbReference type="GO" id="GO:0043161">
    <property type="term" value="P:proteasome-mediated ubiquitin-dependent protein catabolic process"/>
    <property type="evidence" value="ECO:0000314"/>
    <property type="project" value="UniProtKB"/>
</dbReference>
<dbReference type="GO" id="GO:0000209">
    <property type="term" value="P:protein polyubiquitination"/>
    <property type="evidence" value="ECO:0000314"/>
    <property type="project" value="UniProtKB"/>
</dbReference>
<dbReference type="GO" id="GO:0010468">
    <property type="term" value="P:regulation of gene expression"/>
    <property type="evidence" value="ECO:0007669"/>
    <property type="project" value="Ensembl"/>
</dbReference>
<dbReference type="GO" id="GO:1903076">
    <property type="term" value="P:regulation of protein localization to plasma membrane"/>
    <property type="evidence" value="ECO:0007669"/>
    <property type="project" value="Ensembl"/>
</dbReference>
<dbReference type="GO" id="GO:0034976">
    <property type="term" value="P:response to endoplasmic reticulum stress"/>
    <property type="evidence" value="ECO:0007669"/>
    <property type="project" value="Ensembl"/>
</dbReference>
<dbReference type="CDD" id="cd14961">
    <property type="entry name" value="NHL_TRIM32_like"/>
    <property type="match status" value="1"/>
</dbReference>
<dbReference type="CDD" id="cd16516">
    <property type="entry name" value="RING-HC_malin"/>
    <property type="match status" value="1"/>
</dbReference>
<dbReference type="FunFam" id="2.120.10.30:FF:000059">
    <property type="entry name" value="E3 ubiquitin-protein ligase NHLRC1"/>
    <property type="match status" value="1"/>
</dbReference>
<dbReference type="FunFam" id="3.30.40.10:FF:000372">
    <property type="entry name" value="E3 ubiquitin-protein ligase NHLRC1"/>
    <property type="match status" value="1"/>
</dbReference>
<dbReference type="Gene3D" id="2.120.10.30">
    <property type="entry name" value="TolB, C-terminal domain"/>
    <property type="match status" value="1"/>
</dbReference>
<dbReference type="Gene3D" id="3.30.40.10">
    <property type="entry name" value="Zinc/RING finger domain, C3HC4 (zinc finger)"/>
    <property type="match status" value="1"/>
</dbReference>
<dbReference type="InterPro" id="IPR011042">
    <property type="entry name" value="6-blade_b-propeller_TolB-like"/>
</dbReference>
<dbReference type="InterPro" id="IPR001258">
    <property type="entry name" value="NHL_repeat"/>
</dbReference>
<dbReference type="InterPro" id="IPR050952">
    <property type="entry name" value="TRIM-NHL_E3_ligases"/>
</dbReference>
<dbReference type="InterPro" id="IPR001841">
    <property type="entry name" value="Znf_RING"/>
</dbReference>
<dbReference type="InterPro" id="IPR013083">
    <property type="entry name" value="Znf_RING/FYVE/PHD"/>
</dbReference>
<dbReference type="InterPro" id="IPR017907">
    <property type="entry name" value="Znf_RING_CS"/>
</dbReference>
<dbReference type="PANTHER" id="PTHR24104:SF47">
    <property type="entry name" value="E3 UBIQUITIN-PROTEIN LIGASE NHLRC1"/>
    <property type="match status" value="1"/>
</dbReference>
<dbReference type="PANTHER" id="PTHR24104">
    <property type="entry name" value="E3 UBIQUITIN-PROTEIN LIGASE NHLRC1-RELATED"/>
    <property type="match status" value="1"/>
</dbReference>
<dbReference type="Pfam" id="PF14634">
    <property type="entry name" value="zf-RING_5"/>
    <property type="match status" value="1"/>
</dbReference>
<dbReference type="SMART" id="SM00184">
    <property type="entry name" value="RING"/>
    <property type="match status" value="1"/>
</dbReference>
<dbReference type="SUPFAM" id="SSF101898">
    <property type="entry name" value="NHL repeat"/>
    <property type="match status" value="1"/>
</dbReference>
<dbReference type="SUPFAM" id="SSF57850">
    <property type="entry name" value="RING/U-box"/>
    <property type="match status" value="1"/>
</dbReference>
<dbReference type="PROSITE" id="PS51125">
    <property type="entry name" value="NHL"/>
    <property type="match status" value="6"/>
</dbReference>
<dbReference type="PROSITE" id="PS00518">
    <property type="entry name" value="ZF_RING_1"/>
    <property type="match status" value="1"/>
</dbReference>
<dbReference type="PROSITE" id="PS50089">
    <property type="entry name" value="ZF_RING_2"/>
    <property type="match status" value="1"/>
</dbReference>
<accession>Q6VVB1</accession>
<accession>Q3SYB1</accession>
<accession>Q5VUK7</accession>
<accession>Q6IMH1</accession>
<organism>
    <name type="scientific">Homo sapiens</name>
    <name type="common">Human</name>
    <dbReference type="NCBI Taxonomy" id="9606"/>
    <lineage>
        <taxon>Eukaryota</taxon>
        <taxon>Metazoa</taxon>
        <taxon>Chordata</taxon>
        <taxon>Craniata</taxon>
        <taxon>Vertebrata</taxon>
        <taxon>Euteleostomi</taxon>
        <taxon>Mammalia</taxon>
        <taxon>Eutheria</taxon>
        <taxon>Euarchontoglires</taxon>
        <taxon>Primates</taxon>
        <taxon>Haplorrhini</taxon>
        <taxon>Catarrhini</taxon>
        <taxon>Hominidae</taxon>
        <taxon>Homo</taxon>
    </lineage>
</organism>
<sequence length="395" mass="42293">MAAEASESGPALHELMREAEISLLECKVCFEKFGHRQQRRPRNLSCGHVVCLACVAALAHPRTLALECPFCRRACRGCDTSDCLPVLHLIELLGSALRQSPAAHRAAPSAPGALTCHHTFGGWGTLVNPTGLALCPKTGRVVVVHDGRRRVKIFDSGGGCAHQFGEKGDAAQDIRYPVDVTITNDCHVVVTDAGDRSIKVFDFFGQIKLVIGGQFSLPWGVETTPQNGIVVTDAEAGSLHLLDVDFAEGVLRRTERLQAHLCNPRGVAVSWLTGAIAVLEHPLALGTGVCSTRVKVFSSSMQLVGQVDTFGLSLYFPSKITASAVTFDHQGNVIVADTSGPAILCLGKPEEFPVPKPMVTHGLSHPVALTFTKENSLLVLDTASHSIKVYKVDWG</sequence>
<name>NHLC1_HUMAN</name>